<dbReference type="EMBL" id="BA000033">
    <property type="protein sequence ID" value="BAB95043.1"/>
    <property type="molecule type" value="Genomic_DNA"/>
</dbReference>
<dbReference type="RefSeq" id="WP_000073352.1">
    <property type="nucleotide sequence ID" value="NC_003923.1"/>
</dbReference>
<dbReference type="SMR" id="P65494"/>
<dbReference type="KEGG" id="sam:MW1178"/>
<dbReference type="HOGENOM" id="CLU_002472_4_0_9"/>
<dbReference type="GO" id="GO:0005829">
    <property type="term" value="C:cytosol"/>
    <property type="evidence" value="ECO:0007669"/>
    <property type="project" value="TreeGrafter"/>
</dbReference>
<dbReference type="GO" id="GO:0005524">
    <property type="term" value="F:ATP binding"/>
    <property type="evidence" value="ECO:0007669"/>
    <property type="project" value="UniProtKB-UniRule"/>
</dbReference>
<dbReference type="GO" id="GO:0140664">
    <property type="term" value="F:ATP-dependent DNA damage sensor activity"/>
    <property type="evidence" value="ECO:0007669"/>
    <property type="project" value="InterPro"/>
</dbReference>
<dbReference type="GO" id="GO:0003684">
    <property type="term" value="F:damaged DNA binding"/>
    <property type="evidence" value="ECO:0007669"/>
    <property type="project" value="UniProtKB-UniRule"/>
</dbReference>
<dbReference type="GO" id="GO:0030983">
    <property type="term" value="F:mismatched DNA binding"/>
    <property type="evidence" value="ECO:0007669"/>
    <property type="project" value="InterPro"/>
</dbReference>
<dbReference type="GO" id="GO:0006298">
    <property type="term" value="P:mismatch repair"/>
    <property type="evidence" value="ECO:0007669"/>
    <property type="project" value="UniProtKB-UniRule"/>
</dbReference>
<dbReference type="CDD" id="cd03284">
    <property type="entry name" value="ABC_MutS1"/>
    <property type="match status" value="1"/>
</dbReference>
<dbReference type="FunFam" id="1.10.1420.10:FF:000007">
    <property type="entry name" value="DNA mismatch repair protein MutS"/>
    <property type="match status" value="1"/>
</dbReference>
<dbReference type="FunFam" id="3.40.1170.10:FF:000001">
    <property type="entry name" value="DNA mismatch repair protein MutS"/>
    <property type="match status" value="1"/>
</dbReference>
<dbReference type="FunFam" id="3.40.50.300:FF:000896">
    <property type="entry name" value="DNA mismatch repair protein MutS"/>
    <property type="match status" value="1"/>
</dbReference>
<dbReference type="Gene3D" id="1.10.1420.10">
    <property type="match status" value="2"/>
</dbReference>
<dbReference type="Gene3D" id="3.40.1170.10">
    <property type="entry name" value="DNA repair protein MutS, domain I"/>
    <property type="match status" value="1"/>
</dbReference>
<dbReference type="Gene3D" id="3.30.420.110">
    <property type="entry name" value="MutS, connector domain"/>
    <property type="match status" value="1"/>
</dbReference>
<dbReference type="Gene3D" id="3.40.50.300">
    <property type="entry name" value="P-loop containing nucleotide triphosphate hydrolases"/>
    <property type="match status" value="1"/>
</dbReference>
<dbReference type="HAMAP" id="MF_00096">
    <property type="entry name" value="MutS"/>
    <property type="match status" value="1"/>
</dbReference>
<dbReference type="InterPro" id="IPR005748">
    <property type="entry name" value="DNA_mismatch_repair_MutS"/>
</dbReference>
<dbReference type="InterPro" id="IPR007695">
    <property type="entry name" value="DNA_mismatch_repair_MutS-lik_N"/>
</dbReference>
<dbReference type="InterPro" id="IPR017261">
    <property type="entry name" value="DNA_mismatch_repair_MutS/MSH"/>
</dbReference>
<dbReference type="InterPro" id="IPR000432">
    <property type="entry name" value="DNA_mismatch_repair_MutS_C"/>
</dbReference>
<dbReference type="InterPro" id="IPR007861">
    <property type="entry name" value="DNA_mismatch_repair_MutS_clamp"/>
</dbReference>
<dbReference type="InterPro" id="IPR007696">
    <property type="entry name" value="DNA_mismatch_repair_MutS_core"/>
</dbReference>
<dbReference type="InterPro" id="IPR016151">
    <property type="entry name" value="DNA_mismatch_repair_MutS_N"/>
</dbReference>
<dbReference type="InterPro" id="IPR036187">
    <property type="entry name" value="DNA_mismatch_repair_MutS_sf"/>
</dbReference>
<dbReference type="InterPro" id="IPR007860">
    <property type="entry name" value="DNA_mmatch_repair_MutS_con_dom"/>
</dbReference>
<dbReference type="InterPro" id="IPR045076">
    <property type="entry name" value="MutS"/>
</dbReference>
<dbReference type="InterPro" id="IPR036678">
    <property type="entry name" value="MutS_con_dom_sf"/>
</dbReference>
<dbReference type="InterPro" id="IPR027417">
    <property type="entry name" value="P-loop_NTPase"/>
</dbReference>
<dbReference type="NCBIfam" id="TIGR01070">
    <property type="entry name" value="mutS1"/>
    <property type="match status" value="1"/>
</dbReference>
<dbReference type="NCBIfam" id="NF003810">
    <property type="entry name" value="PRK05399.1"/>
    <property type="match status" value="1"/>
</dbReference>
<dbReference type="PANTHER" id="PTHR11361:SF34">
    <property type="entry name" value="DNA MISMATCH REPAIR PROTEIN MSH1, MITOCHONDRIAL"/>
    <property type="match status" value="1"/>
</dbReference>
<dbReference type="PANTHER" id="PTHR11361">
    <property type="entry name" value="DNA MISMATCH REPAIR PROTEIN MUTS FAMILY MEMBER"/>
    <property type="match status" value="1"/>
</dbReference>
<dbReference type="Pfam" id="PF01624">
    <property type="entry name" value="MutS_I"/>
    <property type="match status" value="1"/>
</dbReference>
<dbReference type="Pfam" id="PF05188">
    <property type="entry name" value="MutS_II"/>
    <property type="match status" value="1"/>
</dbReference>
<dbReference type="Pfam" id="PF05192">
    <property type="entry name" value="MutS_III"/>
    <property type="match status" value="1"/>
</dbReference>
<dbReference type="Pfam" id="PF05190">
    <property type="entry name" value="MutS_IV"/>
    <property type="match status" value="1"/>
</dbReference>
<dbReference type="Pfam" id="PF00488">
    <property type="entry name" value="MutS_V"/>
    <property type="match status" value="1"/>
</dbReference>
<dbReference type="PIRSF" id="PIRSF037677">
    <property type="entry name" value="DNA_mis_repair_Msh6"/>
    <property type="match status" value="1"/>
</dbReference>
<dbReference type="SMART" id="SM00534">
    <property type="entry name" value="MUTSac"/>
    <property type="match status" value="1"/>
</dbReference>
<dbReference type="SMART" id="SM00533">
    <property type="entry name" value="MUTSd"/>
    <property type="match status" value="1"/>
</dbReference>
<dbReference type="SUPFAM" id="SSF55271">
    <property type="entry name" value="DNA repair protein MutS, domain I"/>
    <property type="match status" value="1"/>
</dbReference>
<dbReference type="SUPFAM" id="SSF53150">
    <property type="entry name" value="DNA repair protein MutS, domain II"/>
    <property type="match status" value="1"/>
</dbReference>
<dbReference type="SUPFAM" id="SSF48334">
    <property type="entry name" value="DNA repair protein MutS, domain III"/>
    <property type="match status" value="1"/>
</dbReference>
<dbReference type="SUPFAM" id="SSF52540">
    <property type="entry name" value="P-loop containing nucleoside triphosphate hydrolases"/>
    <property type="match status" value="1"/>
</dbReference>
<dbReference type="PROSITE" id="PS00486">
    <property type="entry name" value="DNA_MISMATCH_REPAIR_2"/>
    <property type="match status" value="1"/>
</dbReference>
<evidence type="ECO:0000255" key="1">
    <source>
        <dbReference type="HAMAP-Rule" id="MF_00096"/>
    </source>
</evidence>
<proteinExistence type="inferred from homology"/>
<keyword id="KW-0067">ATP-binding</keyword>
<keyword id="KW-0227">DNA damage</keyword>
<keyword id="KW-0234">DNA repair</keyword>
<keyword id="KW-0238">DNA-binding</keyword>
<keyword id="KW-0547">Nucleotide-binding</keyword>
<organism>
    <name type="scientific">Staphylococcus aureus (strain MW2)</name>
    <dbReference type="NCBI Taxonomy" id="196620"/>
    <lineage>
        <taxon>Bacteria</taxon>
        <taxon>Bacillati</taxon>
        <taxon>Bacillota</taxon>
        <taxon>Bacilli</taxon>
        <taxon>Bacillales</taxon>
        <taxon>Staphylococcaceae</taxon>
        <taxon>Staphylococcus</taxon>
    </lineage>
</organism>
<comment type="function">
    <text evidence="1">This protein is involved in the repair of mismatches in DNA. It is possible that it carries out the mismatch recognition step. This protein has a weak ATPase activity.</text>
</comment>
<comment type="similarity">
    <text evidence="1">Belongs to the DNA mismatch repair MutS family.</text>
</comment>
<feature type="chain" id="PRO_0000115139" description="DNA mismatch repair protein MutS">
    <location>
        <begin position="1"/>
        <end position="872"/>
    </location>
</feature>
<feature type="binding site" evidence="1">
    <location>
        <begin position="602"/>
        <end position="609"/>
    </location>
    <ligand>
        <name>ATP</name>
        <dbReference type="ChEBI" id="CHEBI:30616"/>
    </ligand>
</feature>
<accession>P65494</accession>
<accession>Q99UH8</accession>
<sequence length="872" mass="99904">MSNVTPMMQQYLKIKSEYQDCLLFFRLGDFYEMFYEDAKEASRVLEITLTKRDAKKENPIPMCGVPYHSADSYIDTLVNNGYKVAICEQMEDPKQTKGMVRREVVRIVTPGTVMEQGGVDDKQNNYILSFVMNQPEIALSYCDVSTGELKVTHFNDEATLLNEITTINPNEVVINDNISDNLKRQINMVTETITVRETLSSEIYSVNQTEHKLMYQATQLLLDYIHHTQKRDLSHIEDVVQYAAIDYMKMDFYAKRNLELTESIRLKSKKGTLLWLMDETKTPMGARRLKQWIDRPLISKEQIEARLDIVDEFSAHFIERDTLRTYLNQVYDIERLVGRVSYGNVNARDLIQLKHSISEIPNIKALLNSMNQNTLVQVNQLEPLDDLLDILEQSLVEEPPISVKDGGLFKVGFNTQLDEYLEASKNGKTWLAELQAKERQRTGIKSLKISFNKVFGYFIEITRANLQNFEPSEFGYMRKQTLSNAERFITDELKEKEDIILGAEDKAIELEYQLFVQLREEVKKYTERLQQQAKIISELDCLQSFAEIAQKYNYTRPSFSENKTLELVESRHPVVERVMDYNDYVPNNCRLDNETFIYLITGPNMSGKSTYMRQVAIISIMAQMGAYVPCKEAVLPIFDQIFTRIGAADDLVSGKSTFMVEMLEAQKALTYATEDSLIIFDEIGRGTSTYDGLALAQAMIEYVAETSHAKTLFSTHYHELTTLDQALPSLKNVHVAANEYKGELIFLHKVKDGAVDDSYGIQVAKLADLPEKVISRAQVILSEFEASAGKKSSISNLKMVENEPEINQENLNLSVEETTDTLSQKDFEQASFDLFENDQESEIELQIKNLNLSNMTPIEALVKLSELQNQLK</sequence>
<gene>
    <name evidence="1" type="primary">mutS</name>
    <name type="ordered locus">MW1178</name>
</gene>
<protein>
    <recommendedName>
        <fullName evidence="1">DNA mismatch repair protein MutS</fullName>
    </recommendedName>
</protein>
<reference key="1">
    <citation type="journal article" date="2002" name="Lancet">
        <title>Genome and virulence determinants of high virulence community-acquired MRSA.</title>
        <authorList>
            <person name="Baba T."/>
            <person name="Takeuchi F."/>
            <person name="Kuroda M."/>
            <person name="Yuzawa H."/>
            <person name="Aoki K."/>
            <person name="Oguchi A."/>
            <person name="Nagai Y."/>
            <person name="Iwama N."/>
            <person name="Asano K."/>
            <person name="Naimi T."/>
            <person name="Kuroda H."/>
            <person name="Cui L."/>
            <person name="Yamamoto K."/>
            <person name="Hiramatsu K."/>
        </authorList>
    </citation>
    <scope>NUCLEOTIDE SEQUENCE [LARGE SCALE GENOMIC DNA]</scope>
    <source>
        <strain>MW2</strain>
    </source>
</reference>
<name>MUTS_STAAW</name>